<keyword id="KW-0238">DNA-binding</keyword>
<keyword id="KW-0479">Metal-binding</keyword>
<keyword id="KW-0539">Nucleus</keyword>
<keyword id="KW-1185">Reference proteome</keyword>
<keyword id="KW-0804">Transcription</keyword>
<keyword id="KW-0805">Transcription regulation</keyword>
<keyword id="KW-0843">Virulence</keyword>
<keyword id="KW-0862">Zinc</keyword>
<reference key="1">
    <citation type="journal article" date="2010" name="Nature">
        <title>Comparative genomics reveals mobile pathogenicity chromosomes in Fusarium.</title>
        <authorList>
            <person name="Ma L.-J."/>
            <person name="van der Does H.C."/>
            <person name="Borkovich K.A."/>
            <person name="Coleman J.J."/>
            <person name="Daboussi M.-J."/>
            <person name="Di Pietro A."/>
            <person name="Dufresne M."/>
            <person name="Freitag M."/>
            <person name="Grabherr M."/>
            <person name="Henrissat B."/>
            <person name="Houterman P.M."/>
            <person name="Kang S."/>
            <person name="Shim W.-B."/>
            <person name="Woloshuk C."/>
            <person name="Xie X."/>
            <person name="Xu J.-R."/>
            <person name="Antoniw J."/>
            <person name="Baker S.E."/>
            <person name="Bluhm B.H."/>
            <person name="Breakspear A."/>
            <person name="Brown D.W."/>
            <person name="Butchko R.A.E."/>
            <person name="Chapman S."/>
            <person name="Coulson R."/>
            <person name="Coutinho P.M."/>
            <person name="Danchin E.G.J."/>
            <person name="Diener A."/>
            <person name="Gale L.R."/>
            <person name="Gardiner D.M."/>
            <person name="Goff S."/>
            <person name="Hammond-Kosack K.E."/>
            <person name="Hilburn K."/>
            <person name="Hua-Van A."/>
            <person name="Jonkers W."/>
            <person name="Kazan K."/>
            <person name="Kodira C.D."/>
            <person name="Koehrsen M."/>
            <person name="Kumar L."/>
            <person name="Lee Y.-H."/>
            <person name="Li L."/>
            <person name="Manners J.M."/>
            <person name="Miranda-Saavedra D."/>
            <person name="Mukherjee M."/>
            <person name="Park G."/>
            <person name="Park J."/>
            <person name="Park S.-Y."/>
            <person name="Proctor R.H."/>
            <person name="Regev A."/>
            <person name="Ruiz-Roldan M.C."/>
            <person name="Sain D."/>
            <person name="Sakthikumar S."/>
            <person name="Sykes S."/>
            <person name="Schwartz D.C."/>
            <person name="Turgeon B.G."/>
            <person name="Wapinski I."/>
            <person name="Yoder O."/>
            <person name="Young S."/>
            <person name="Zeng Q."/>
            <person name="Zhou S."/>
            <person name="Galagan J."/>
            <person name="Cuomo C.A."/>
            <person name="Kistler H.C."/>
            <person name="Rep M."/>
        </authorList>
    </citation>
    <scope>NUCLEOTIDE SEQUENCE [LARGE SCALE GENOMIC DNA]</scope>
    <source>
        <strain>4287 / CBS 123668 / FGSC 9935 / NRRL 34936</strain>
    </source>
</reference>
<reference key="2">
    <citation type="journal article" date="2007" name="Fungal Genet. Biol.">
        <title>The gene coding for a new transcription factor (ftf1) of Fusarium oxysporum is only expressed during infection of common bean.</title>
        <authorList>
            <person name="Ramos B."/>
            <person name="Alves-Santos F.M."/>
            <person name="Garcia-Sanchez M.A."/>
            <person name="Martin-Rodrigues N."/>
            <person name="Eslava A.P."/>
            <person name="Diaz-Minguez J.M."/>
        </authorList>
    </citation>
    <scope>FUNCTION</scope>
    <scope>INDUCTION</scope>
</reference>
<reference key="3">
    <citation type="journal article" date="2016" name="Mol. Plant Pathol.">
        <title>The FTF gene family regulates virulence and expression of SIX effectors in Fusarium oxysporum.</title>
        <authorList>
            <person name="Nino-Sanchez J."/>
            <person name="Casado-Del Castillo V."/>
            <person name="Tello V."/>
            <person name="De Vega-Bartol J.J."/>
            <person name="Ramos B."/>
            <person name="Sukno S.A."/>
            <person name="Diaz Minguez J.M."/>
        </authorList>
    </citation>
    <scope>FUNCTION</scope>
</reference>
<feature type="chain" id="PRO_0000462484" description="Zn(2)-C6 fungal-type transcription factor FTF1c">
    <location>
        <begin position="1"/>
        <end position="930"/>
    </location>
</feature>
<feature type="DNA-binding region" description="Zn(2)-C6 fungal-type" evidence="1">
    <location>
        <begin position="137"/>
        <end position="164"/>
    </location>
</feature>
<organism>
    <name type="scientific">Fusarium oxysporum f. sp. lycopersici (strain 4287 / CBS 123668 / FGSC 9935 / NRRL 34936)</name>
    <name type="common">Fusarium vascular wilt of tomato</name>
    <dbReference type="NCBI Taxonomy" id="426428"/>
    <lineage>
        <taxon>Eukaryota</taxon>
        <taxon>Fungi</taxon>
        <taxon>Dikarya</taxon>
        <taxon>Ascomycota</taxon>
        <taxon>Pezizomycotina</taxon>
        <taxon>Sordariomycetes</taxon>
        <taxon>Hypocreomycetidae</taxon>
        <taxon>Hypocreales</taxon>
        <taxon>Nectriaceae</taxon>
        <taxon>Fusarium</taxon>
        <taxon>Fusarium oxysporum species complex</taxon>
    </lineage>
</organism>
<name>TF1C1_FUSO4</name>
<evidence type="ECO:0000255" key="1">
    <source>
        <dbReference type="PROSITE-ProRule" id="PRU00227"/>
    </source>
</evidence>
<evidence type="ECO:0000269" key="2">
    <source>
    </source>
</evidence>
<evidence type="ECO:0000269" key="3">
    <source>
    </source>
</evidence>
<evidence type="ECO:0000303" key="4">
    <source>
    </source>
</evidence>
<gene>
    <name evidence="4" type="primary">FTF1c</name>
    <name type="ORF">FOXG_17123</name>
</gene>
<protein>
    <recommendedName>
        <fullName evidence="4">Zn(2)-C6 fungal-type transcription factor FTF1c</fullName>
    </recommendedName>
    <alternativeName>
        <fullName evidence="4">Fusarium transcription factor 1c</fullName>
    </alternativeName>
</protein>
<comment type="function">
    <text evidence="2 3">Zn(2)-C6 fungal-type transcription factor that has a role in the establishment of the fungus within the plant and/or the progress of the disease (PubMed:17462924, PubMed:26817616). Regulates the expression of virulence factors such as SIX1 and SIX6 (PubMed:26817616).</text>
</comment>
<comment type="subcellular location">
    <subcellularLocation>
        <location evidence="1">Nucleus</location>
    </subcellularLocation>
</comment>
<comment type="induction">
    <text evidence="2">Exclusively expressed during infection of common bean.</text>
</comment>
<comment type="miscellaneous">
    <text evidence="2">Multiple copies of the gene are present in highly virulent fusarium oxysporum strains.</text>
</comment>
<accession>A0A0J9W9G2</accession>
<dbReference type="EMBL" id="DS231737">
    <property type="protein sequence ID" value="KNB19969.1"/>
    <property type="molecule type" value="Genomic_DNA"/>
</dbReference>
<dbReference type="RefSeq" id="XP_018258014.1">
    <property type="nucleotide sequence ID" value="XM_018397138.1"/>
</dbReference>
<dbReference type="GeneID" id="28957921"/>
<dbReference type="KEGG" id="fox:FOXG_17123"/>
<dbReference type="VEuPathDB" id="FungiDB:FOXG_17123"/>
<dbReference type="OrthoDB" id="83037at110618"/>
<dbReference type="Proteomes" id="UP000009097">
    <property type="component" value="Unassembled WGS sequence"/>
</dbReference>
<dbReference type="GO" id="GO:0005634">
    <property type="term" value="C:nucleus"/>
    <property type="evidence" value="ECO:0007669"/>
    <property type="project" value="UniProtKB-SubCell"/>
</dbReference>
<dbReference type="GO" id="GO:0003677">
    <property type="term" value="F:DNA binding"/>
    <property type="evidence" value="ECO:0007669"/>
    <property type="project" value="InterPro"/>
</dbReference>
<dbReference type="GO" id="GO:0000981">
    <property type="term" value="F:DNA-binding transcription factor activity, RNA polymerase II-specific"/>
    <property type="evidence" value="ECO:0007669"/>
    <property type="project" value="InterPro"/>
</dbReference>
<dbReference type="GO" id="GO:0008270">
    <property type="term" value="F:zinc ion binding"/>
    <property type="evidence" value="ECO:0007669"/>
    <property type="project" value="InterPro"/>
</dbReference>
<dbReference type="GO" id="GO:0006351">
    <property type="term" value="P:DNA-templated transcription"/>
    <property type="evidence" value="ECO:0007669"/>
    <property type="project" value="InterPro"/>
</dbReference>
<dbReference type="CDD" id="cd12148">
    <property type="entry name" value="fungal_TF_MHR"/>
    <property type="match status" value="1"/>
</dbReference>
<dbReference type="CDD" id="cd00067">
    <property type="entry name" value="GAL4"/>
    <property type="match status" value="1"/>
</dbReference>
<dbReference type="Gene3D" id="4.10.240.10">
    <property type="entry name" value="Zn(2)-C6 fungal-type DNA-binding domain"/>
    <property type="match status" value="1"/>
</dbReference>
<dbReference type="InterPro" id="IPR050815">
    <property type="entry name" value="TF_fung"/>
</dbReference>
<dbReference type="InterPro" id="IPR007219">
    <property type="entry name" value="Transcription_factor_dom_fun"/>
</dbReference>
<dbReference type="InterPro" id="IPR036864">
    <property type="entry name" value="Zn2-C6_fun-type_DNA-bd_sf"/>
</dbReference>
<dbReference type="InterPro" id="IPR001138">
    <property type="entry name" value="Zn2Cys6_DnaBD"/>
</dbReference>
<dbReference type="PANTHER" id="PTHR47338:SF27">
    <property type="entry name" value="ZN(II)2CYS6 TRANSCRIPTION FACTOR (EUROFUNG)"/>
    <property type="match status" value="1"/>
</dbReference>
<dbReference type="PANTHER" id="PTHR47338">
    <property type="entry name" value="ZN(II)2CYS6 TRANSCRIPTION FACTOR (EUROFUNG)-RELATED"/>
    <property type="match status" value="1"/>
</dbReference>
<dbReference type="Pfam" id="PF04082">
    <property type="entry name" value="Fungal_trans"/>
    <property type="match status" value="1"/>
</dbReference>
<dbReference type="Pfam" id="PF00172">
    <property type="entry name" value="Zn_clus"/>
    <property type="match status" value="1"/>
</dbReference>
<dbReference type="PRINTS" id="PR00755">
    <property type="entry name" value="AFLATOXINBRP"/>
</dbReference>
<dbReference type="SMART" id="SM00906">
    <property type="entry name" value="Fungal_trans"/>
    <property type="match status" value="1"/>
</dbReference>
<dbReference type="SMART" id="SM00066">
    <property type="entry name" value="GAL4"/>
    <property type="match status" value="1"/>
</dbReference>
<dbReference type="SUPFAM" id="SSF57701">
    <property type="entry name" value="Zn2/Cys6 DNA-binding domain"/>
    <property type="match status" value="1"/>
</dbReference>
<dbReference type="PROSITE" id="PS00463">
    <property type="entry name" value="ZN2_CY6_FUNGAL_1"/>
    <property type="match status" value="1"/>
</dbReference>
<dbReference type="PROSITE" id="PS50048">
    <property type="entry name" value="ZN2_CY6_FUNGAL_2"/>
    <property type="match status" value="1"/>
</dbReference>
<sequence length="930" mass="103081">MDFTHFDDFAFAYYGLPDQASLASLVDHTHMFQSPTAFPQHQAMSGLAHSGLPLGTLPTGNRSQSMEGSKAPPDRTSPASNALEDPTTDEFGLASRNRVGGIDLGGKPKEDKADATPAWSGLKTKAGKERKRLPLACIPCRRKKIRCSGEKPACEHCLRSYIPCVYKITTRKAAPRTDYMAMLDKRPKCMEERVIKAIPKSDQEVASSVTRPVVKPAIPGTVPSSKPTKKRSAEEAFGPDLEACAKAPSEPKIEGDNGPSNLQVQEGEENKLQHEGTEALPSKDIQEHLADVFFDNIYGQSYHLLHKPSYMRKLKNGTLPPVLVLTVCAVAARFTSNPLVSSSGPEFLRGEEWASHARDICTKRYEWPNLTILTCLLILGLHEFGTCQGGRSWALGGQAIRMAFALQLHKDLEYDPSGRNGTKTQLSFIDREIRRRIMWACFLMDRFNSSGTDRPMFIREDTIQIPLPVKEKYFQFGMPAPTEMLDGRVPHPPSPNDGQIADVRENMGVAAFLIRAIALWGRITTCLSQGCKDLDSNPLWEGKSHYMNHLNDAVNLEASLPLSLKYSAENLEVHKTENTPSQFLFMHICLQHNILLVSRAAMSARKQHGVHDDFFSEASKRTFNAANRISELLREAEQSGCFVSAPFAGYCAFSSTTVHILAIISRNPSMKLTAEANLTTNVKYLHKMKKYWGMFHWMVENVRTQYRNVLDAMRAGANVEERATQLSFLQYGDWFNRYPRGLSDAEFMDPATHKRKDSGADGVLDAKPELRSVEKYFTLPTPRRVENKDTIRAAAPKRKQSAKKQTGMPAQPGQHLDSLQSIDADAVSQEHKFSGGLGLQITGAAGFNPLAASNQQNPDFSTTMSPTSPANMTAFAHYAHTPTFFPPELLAMNFGQDSNGNIDPLDRQLIYGGYSMDASTGLGHGHTWSL</sequence>
<proteinExistence type="evidence at transcript level"/>